<organism>
    <name type="scientific">Rhodiola rosea</name>
    <name type="common">Roseroot</name>
    <name type="synonym">Sedum rhodiola</name>
    <dbReference type="NCBI Taxonomy" id="203015"/>
    <lineage>
        <taxon>Eukaryota</taxon>
        <taxon>Viridiplantae</taxon>
        <taxon>Streptophyta</taxon>
        <taxon>Embryophyta</taxon>
        <taxon>Tracheophyta</taxon>
        <taxon>Spermatophyta</taxon>
        <taxon>Magnoliopsida</taxon>
        <taxon>eudicotyledons</taxon>
        <taxon>Gunneridae</taxon>
        <taxon>Pentapetalae</taxon>
        <taxon>Saxifragales</taxon>
        <taxon>Crassulaceae</taxon>
        <taxon>Rhodiola</taxon>
    </lineage>
</organism>
<dbReference type="EC" id="4.1.1.108" evidence="2"/>
<dbReference type="EMBL" id="MF674522">
    <property type="protein sequence ID" value="AUI41111.1"/>
    <property type="molecule type" value="mRNA"/>
</dbReference>
<dbReference type="PDB" id="6EEQ">
    <property type="method" value="X-ray"/>
    <property type="resolution" value="2.60 A"/>
    <property type="chains" value="A=1-490"/>
</dbReference>
<dbReference type="PDBsum" id="6EEQ"/>
<dbReference type="SMR" id="A0A2I6B3P0"/>
<dbReference type="GO" id="GO:0005737">
    <property type="term" value="C:cytoplasm"/>
    <property type="evidence" value="ECO:0007669"/>
    <property type="project" value="TreeGrafter"/>
</dbReference>
<dbReference type="GO" id="GO:0016831">
    <property type="term" value="F:carboxy-lyase activity"/>
    <property type="evidence" value="ECO:0007669"/>
    <property type="project" value="UniProtKB-KW"/>
</dbReference>
<dbReference type="GO" id="GO:0030170">
    <property type="term" value="F:pyridoxal phosphate binding"/>
    <property type="evidence" value="ECO:0007669"/>
    <property type="project" value="InterPro"/>
</dbReference>
<dbReference type="GO" id="GO:0006520">
    <property type="term" value="P:amino acid metabolic process"/>
    <property type="evidence" value="ECO:0007669"/>
    <property type="project" value="InterPro"/>
</dbReference>
<dbReference type="GO" id="GO:0019752">
    <property type="term" value="P:carboxylic acid metabolic process"/>
    <property type="evidence" value="ECO:0007669"/>
    <property type="project" value="InterPro"/>
</dbReference>
<dbReference type="CDD" id="cd06450">
    <property type="entry name" value="DOPA_deC_like"/>
    <property type="match status" value="1"/>
</dbReference>
<dbReference type="Gene3D" id="3.90.1150.10">
    <property type="entry name" value="Aspartate Aminotransferase, domain 1"/>
    <property type="match status" value="1"/>
</dbReference>
<dbReference type="Gene3D" id="1.20.1340.10">
    <property type="entry name" value="dopa decarboxylase, N-terminal domain"/>
    <property type="match status" value="1"/>
</dbReference>
<dbReference type="Gene3D" id="3.40.640.10">
    <property type="entry name" value="Type I PLP-dependent aspartate aminotransferase-like (Major domain)"/>
    <property type="match status" value="1"/>
</dbReference>
<dbReference type="InterPro" id="IPR010977">
    <property type="entry name" value="Aromatic_deC"/>
</dbReference>
<dbReference type="InterPro" id="IPR002129">
    <property type="entry name" value="PyrdxlP-dep_de-COase"/>
</dbReference>
<dbReference type="InterPro" id="IPR015424">
    <property type="entry name" value="PyrdxlP-dep_Trfase"/>
</dbReference>
<dbReference type="InterPro" id="IPR015421">
    <property type="entry name" value="PyrdxlP-dep_Trfase_major"/>
</dbReference>
<dbReference type="InterPro" id="IPR015422">
    <property type="entry name" value="PyrdxlP-dep_Trfase_small"/>
</dbReference>
<dbReference type="PANTHER" id="PTHR11999">
    <property type="entry name" value="GROUP II PYRIDOXAL-5-PHOSPHATE DECARBOXYLASE"/>
    <property type="match status" value="1"/>
</dbReference>
<dbReference type="PANTHER" id="PTHR11999:SF169">
    <property type="entry name" value="TYROSINE DECARBOXYLASE 1-LIKE"/>
    <property type="match status" value="1"/>
</dbReference>
<dbReference type="Pfam" id="PF00282">
    <property type="entry name" value="Pyridoxal_deC"/>
    <property type="match status" value="1"/>
</dbReference>
<dbReference type="PRINTS" id="PR00800">
    <property type="entry name" value="YHDCRBOXLASE"/>
</dbReference>
<dbReference type="SUPFAM" id="SSF53383">
    <property type="entry name" value="PLP-dependent transferases"/>
    <property type="match status" value="1"/>
</dbReference>
<proteinExistence type="evidence at protein level"/>
<gene>
    <name evidence="5" type="primary">4HPAAS</name>
    <name evidence="4" type="synonym">HPAAS</name>
</gene>
<feature type="chain" id="PRO_0000450478" description="4-hydroxyphenylacetaldehyde synthase">
    <location>
        <begin position="1"/>
        <end position="490"/>
    </location>
</feature>
<feature type="binding site" evidence="1">
    <location>
        <position position="97"/>
    </location>
    <ligand>
        <name>L-phenylalanine</name>
        <dbReference type="ChEBI" id="CHEBI:58095"/>
    </ligand>
</feature>
<feature type="binding site" evidence="1">
    <location>
        <position position="198"/>
    </location>
    <ligand>
        <name>L-phenylalanine</name>
        <dbReference type="ChEBI" id="CHEBI:58095"/>
    </ligand>
</feature>
<feature type="binding site" evidence="1">
    <location>
        <position position="313"/>
    </location>
    <ligand>
        <name>L-phenylalanine</name>
        <dbReference type="ChEBI" id="CHEBI:58095"/>
    </ligand>
</feature>
<feature type="binding site" evidence="1">
    <location>
        <position position="343"/>
    </location>
    <ligand>
        <name>L-phenylalanine</name>
        <dbReference type="ChEBI" id="CHEBI:58095"/>
    </ligand>
</feature>
<feature type="modified residue" description="N6-(pyridoxal phosphate)lysine" evidence="3">
    <location>
        <position position="314"/>
    </location>
</feature>
<feature type="helix" evidence="7">
    <location>
        <begin position="19"/>
        <end position="39"/>
    </location>
</feature>
<feature type="turn" evidence="7">
    <location>
        <begin position="40"/>
        <end position="42"/>
    </location>
</feature>
<feature type="turn" evidence="7">
    <location>
        <begin position="51"/>
        <end position="57"/>
    </location>
</feature>
<feature type="helix" evidence="7">
    <location>
        <begin position="69"/>
        <end position="79"/>
    </location>
</feature>
<feature type="strand" evidence="7">
    <location>
        <begin position="92"/>
        <end position="95"/>
    </location>
</feature>
<feature type="helix" evidence="7">
    <location>
        <begin position="102"/>
        <end position="114"/>
    </location>
</feature>
<feature type="strand" evidence="7">
    <location>
        <begin position="119"/>
        <end position="121"/>
    </location>
</feature>
<feature type="helix" evidence="7">
    <location>
        <begin position="125"/>
        <end position="141"/>
    </location>
</feature>
<feature type="helix" evidence="7">
    <location>
        <begin position="146"/>
        <end position="148"/>
    </location>
</feature>
<feature type="helix" evidence="7">
    <location>
        <begin position="150"/>
        <end position="152"/>
    </location>
</feature>
<feature type="strand" evidence="7">
    <location>
        <begin position="155"/>
        <end position="161"/>
    </location>
</feature>
<feature type="helix" evidence="7">
    <location>
        <begin position="162"/>
        <end position="181"/>
    </location>
</feature>
<feature type="helix" evidence="7">
    <location>
        <begin position="186"/>
        <end position="188"/>
    </location>
</feature>
<feature type="strand" evidence="7">
    <location>
        <begin position="189"/>
        <end position="194"/>
    </location>
</feature>
<feature type="helix" evidence="7">
    <location>
        <begin position="199"/>
        <end position="207"/>
    </location>
</feature>
<feature type="helix" evidence="7">
    <location>
        <begin position="212"/>
        <end position="214"/>
    </location>
</feature>
<feature type="strand" evidence="7">
    <location>
        <begin position="215"/>
        <end position="218"/>
    </location>
</feature>
<feature type="helix" evidence="7">
    <location>
        <begin position="222"/>
        <end position="224"/>
    </location>
</feature>
<feature type="helix" evidence="7">
    <location>
        <begin position="230"/>
        <end position="242"/>
    </location>
</feature>
<feature type="strand" evidence="7">
    <location>
        <begin position="246"/>
        <end position="255"/>
    </location>
</feature>
<feature type="strand" evidence="7">
    <location>
        <begin position="257"/>
        <end position="259"/>
    </location>
</feature>
<feature type="helix" evidence="7">
    <location>
        <begin position="265"/>
        <end position="274"/>
    </location>
</feature>
<feature type="strand" evidence="7">
    <location>
        <begin position="278"/>
        <end position="282"/>
    </location>
</feature>
<feature type="helix" evidence="7">
    <location>
        <begin position="286"/>
        <end position="289"/>
    </location>
</feature>
<feature type="helix" evidence="7">
    <location>
        <begin position="293"/>
        <end position="296"/>
    </location>
</feature>
<feature type="helix" evidence="7">
    <location>
        <begin position="297"/>
        <end position="299"/>
    </location>
</feature>
<feature type="helix" evidence="7">
    <location>
        <begin position="302"/>
        <end position="304"/>
    </location>
</feature>
<feature type="strand" evidence="7">
    <location>
        <begin position="306"/>
        <end position="311"/>
    </location>
</feature>
<feature type="strand" evidence="7">
    <location>
        <begin position="323"/>
        <end position="328"/>
    </location>
</feature>
<feature type="helix" evidence="7">
    <location>
        <begin position="331"/>
        <end position="337"/>
    </location>
</feature>
<feature type="helix" evidence="7">
    <location>
        <begin position="353"/>
        <end position="355"/>
    </location>
</feature>
<feature type="strand" evidence="7">
    <location>
        <begin position="356"/>
        <end position="358"/>
    </location>
</feature>
<feature type="helix" evidence="7">
    <location>
        <begin position="365"/>
        <end position="400"/>
    </location>
</feature>
<feature type="strand" evidence="7">
    <location>
        <begin position="405"/>
        <end position="409"/>
    </location>
</feature>
<feature type="strand" evidence="7">
    <location>
        <begin position="412"/>
        <end position="420"/>
    </location>
</feature>
<feature type="helix" evidence="7">
    <location>
        <begin position="430"/>
        <end position="444"/>
    </location>
</feature>
<feature type="strand" evidence="7">
    <location>
        <begin position="448"/>
        <end position="454"/>
    </location>
</feature>
<feature type="strand" evidence="7">
    <location>
        <begin position="457"/>
        <end position="463"/>
    </location>
</feature>
<feature type="helix" evidence="7">
    <location>
        <begin position="471"/>
        <end position="486"/>
    </location>
</feature>
<keyword id="KW-0002">3D-structure</keyword>
<keyword id="KW-0210">Decarboxylase</keyword>
<keyword id="KW-0456">Lyase</keyword>
<keyword id="KW-0663">Pyridoxal phosphate</keyword>
<comment type="function">
    <text evidence="2">Catalyzes the production of 4-hydroxyphenylacetaldehyde (HPAA) directly from L-tyrosine, tyramine not being formed as an intermediate.</text>
</comment>
<comment type="catalytic activity">
    <reaction evidence="2">
        <text>L-tyrosine + O2 + H2O + H(+) = (4-hydroxyphenyl)acetaldehyde + H2O2 + NH4(+) + CO2</text>
        <dbReference type="Rhea" id="RHEA:55528"/>
        <dbReference type="ChEBI" id="CHEBI:15377"/>
        <dbReference type="ChEBI" id="CHEBI:15378"/>
        <dbReference type="ChEBI" id="CHEBI:15379"/>
        <dbReference type="ChEBI" id="CHEBI:15621"/>
        <dbReference type="ChEBI" id="CHEBI:16240"/>
        <dbReference type="ChEBI" id="CHEBI:16526"/>
        <dbReference type="ChEBI" id="CHEBI:28938"/>
        <dbReference type="ChEBI" id="CHEBI:58315"/>
        <dbReference type="EC" id="4.1.1.108"/>
    </reaction>
    <physiologicalReaction direction="left-to-right" evidence="2">
        <dbReference type="Rhea" id="RHEA:55529"/>
    </physiologicalReaction>
</comment>
<comment type="cofactor">
    <cofactor evidence="3">
        <name>pyridoxal 5'-phosphate</name>
        <dbReference type="ChEBI" id="CHEBI:597326"/>
    </cofactor>
</comment>
<comment type="biophysicochemical properties">
    <kinetics>
        <KM evidence="2">0.42 mM for L-tyrosine</KM>
        <text evidence="2">kcat is 4.91 sec(-1) with L-tyrosine as substrate.</text>
    </kinetics>
</comment>
<comment type="subunit">
    <text evidence="3">Homodimer.</text>
</comment>
<comment type="biotechnology">
    <text evidence="3">Yeast engineered to express 4HPAAS together with Pseudomonas putida DDC (PpDDC), Beta vulgaris L-tyrosine hydroxylase (BvTyH) and Papaver somniferum (S)-norcoclaurine synthase (PsNCS) accumulates (S)-norcoclaurine, an important precursor for the production of benzylisoquinoline alkaloids (BIA).</text>
</comment>
<comment type="similarity">
    <text evidence="6">Belongs to the group II decarboxylase family.</text>
</comment>
<evidence type="ECO:0000250" key="1">
    <source>
        <dbReference type="UniProtKB" id="Q8RY79"/>
    </source>
</evidence>
<evidence type="ECO:0000269" key="2">
    <source>
    </source>
</evidence>
<evidence type="ECO:0000269" key="3">
    <source>
    </source>
</evidence>
<evidence type="ECO:0000303" key="4">
    <source>
    </source>
</evidence>
<evidence type="ECO:0000303" key="5">
    <source>
    </source>
</evidence>
<evidence type="ECO:0000305" key="6"/>
<evidence type="ECO:0007829" key="7">
    <source>
        <dbReference type="PDB" id="6EEQ"/>
    </source>
</evidence>
<sequence length="490" mass="54374">MGSLPSPNDPSNTFNPMDLTELSTESKLVVDFITQYYQTLETRPVQPRVKPGFLTGQLPDKAPFHGESMEVILSDVNEKIVPGLTHWQSPNFHAYFPASSSNAGLLGELLCSGLSVIGFTWSSSPAATELENVVVDWMAKMLNLPSSFCFSGGGGGVLQANTCEAVLCTLAAARDKALNRVGDDQINKLVLYCSDQTHFTIHKGAKLIGIRSKNIKSITTKKENEFKLCPNDLRDAIRSDLEAGLVPFYVCGTIGTTALGVVDPIKELGKVAREFDLWLHVDGAYGGSACICPEFQHYLDGVDLVDSISMNAHKWLLSNLDCCFLWLQSPNALIESLAAEANFLKGGSEMVDYKDWQISLSRRFRAIKMWMVIRRYGVSNLIEHIRSDVSMAVRFEEMVAADDRFEIVFPRKFALVCFKLSSEKTPPGRDSELTRELMERVNSSGKAYLSGVQMGRIFFIRCVIGSSLTEERHVDNLWRLIQETAQSIVS</sequence>
<name>HPAAS_RHORB</name>
<accession>A0A2I6B3P0</accession>
<reference key="1">
    <citation type="journal article" date="2018" name="Mol. Plant">
        <title>Complete pathway elucidation and heterologous reconstitution of Rhodiola salidroside biosynthesis.</title>
        <authorList>
            <person name="Torrens-Spence M.P."/>
            <person name="Pluskal T."/>
            <person name="Li F.S."/>
            <person name="Carballo V."/>
            <person name="Weng J.K."/>
        </authorList>
    </citation>
    <scope>NUCLEOTIDE SEQUENCE [MRNA]</scope>
    <scope>FUNCTION</scope>
    <scope>CATALYTIC ACTIVITY</scope>
    <scope>BIOPHYSICOCHEMICAL PROPERTIES</scope>
</reference>
<reference key="2">
    <citation type="journal article" date="2020" name="Proc. Natl. Acad. Sci. U.S.A.">
        <title>Structural basis for divergent and convergent evolution of catalytic machineries in plant aromatic amino acid decarboxylase proteins.</title>
        <authorList>
            <person name="Torrens-Spence M.P."/>
            <person name="Chiang Y.-C."/>
            <person name="Smith T."/>
            <person name="Vicent M.A."/>
            <person name="Wang Y."/>
            <person name="Weng J.-K."/>
        </authorList>
    </citation>
    <scope>X-RAY CRYSTALLOGRAPHY (2.60 ANGSTROMS) IN COMPLEX WITH PYRIDOXAL PHOSPHATE</scope>
    <scope>SUBUNIT</scope>
    <scope>BIOTECHNOLOGY</scope>
</reference>
<protein>
    <recommendedName>
        <fullName evidence="4">4-hydroxyphenylacetaldehyde synthase</fullName>
        <shortName evidence="4">HPAA synthase</shortName>
        <shortName evidence="5">Rr4HPAAS</shortName>
        <shortName evidence="4">RrHPAAS</shortName>
        <ecNumber evidence="2">4.1.1.108</ecNumber>
    </recommendedName>
</protein>